<name>NUOB_HELAH</name>
<gene>
    <name evidence="1" type="primary">nuoB</name>
    <name type="ordered locus">Hac_0223</name>
</gene>
<protein>
    <recommendedName>
        <fullName evidence="1">NADH-quinone oxidoreductase subunit B</fullName>
        <ecNumber evidence="1">7.1.1.-</ecNumber>
    </recommendedName>
    <alternativeName>
        <fullName evidence="1">NADH dehydrogenase I subunit B</fullName>
    </alternativeName>
    <alternativeName>
        <fullName evidence="1">NDH-1 subunit B</fullName>
    </alternativeName>
</protein>
<accession>Q17Z53</accession>
<keyword id="KW-0004">4Fe-4S</keyword>
<keyword id="KW-0997">Cell inner membrane</keyword>
<keyword id="KW-1003">Cell membrane</keyword>
<keyword id="KW-0408">Iron</keyword>
<keyword id="KW-0411">Iron-sulfur</keyword>
<keyword id="KW-0472">Membrane</keyword>
<keyword id="KW-0479">Metal-binding</keyword>
<keyword id="KW-0520">NAD</keyword>
<keyword id="KW-0874">Quinone</keyword>
<keyword id="KW-1278">Translocase</keyword>
<keyword id="KW-0813">Transport</keyword>
<keyword id="KW-0830">Ubiquinone</keyword>
<sequence length="159" mass="17837">MQQAPVVLSTLDKLLNWGRSNSLWPLTYGLACCAIEMMATGGSRFDFDRFGTIFRASPRQSDVMIIAGTLTKKHAEFMRRLYDQMPEPKWVISMGSCANTGGMFNTYATVQGADRIIPVDIYLPGCAPRPETLQYALMVLQDKIRRSKAIKQDAPKRLV</sequence>
<reference key="1">
    <citation type="journal article" date="2006" name="PLoS Genet.">
        <title>Who ate whom? Adaptive Helicobacter genomic changes that accompanied a host jump from early humans to large felines.</title>
        <authorList>
            <person name="Eppinger M."/>
            <person name="Baar C."/>
            <person name="Linz B."/>
            <person name="Raddatz G."/>
            <person name="Lanz C."/>
            <person name="Keller H."/>
            <person name="Morelli G."/>
            <person name="Gressmann H."/>
            <person name="Achtman M."/>
            <person name="Schuster S.C."/>
        </authorList>
    </citation>
    <scope>NUCLEOTIDE SEQUENCE [LARGE SCALE GENOMIC DNA]</scope>
    <source>
        <strain>Sheeba</strain>
    </source>
</reference>
<organism>
    <name type="scientific">Helicobacter acinonychis (strain Sheeba)</name>
    <dbReference type="NCBI Taxonomy" id="382638"/>
    <lineage>
        <taxon>Bacteria</taxon>
        <taxon>Pseudomonadati</taxon>
        <taxon>Campylobacterota</taxon>
        <taxon>Epsilonproteobacteria</taxon>
        <taxon>Campylobacterales</taxon>
        <taxon>Helicobacteraceae</taxon>
        <taxon>Helicobacter</taxon>
    </lineage>
</organism>
<feature type="chain" id="PRO_0000376246" description="NADH-quinone oxidoreductase subunit B">
    <location>
        <begin position="1"/>
        <end position="159"/>
    </location>
</feature>
<feature type="binding site" evidence="1">
    <location>
        <position position="32"/>
    </location>
    <ligand>
        <name>[4Fe-4S] cluster</name>
        <dbReference type="ChEBI" id="CHEBI:49883"/>
    </ligand>
</feature>
<feature type="binding site" evidence="1">
    <location>
        <position position="33"/>
    </location>
    <ligand>
        <name>[4Fe-4S] cluster</name>
        <dbReference type="ChEBI" id="CHEBI:49883"/>
    </ligand>
</feature>
<feature type="binding site" evidence="1">
    <location>
        <position position="97"/>
    </location>
    <ligand>
        <name>[4Fe-4S] cluster</name>
        <dbReference type="ChEBI" id="CHEBI:49883"/>
    </ligand>
</feature>
<feature type="binding site" evidence="1">
    <location>
        <position position="126"/>
    </location>
    <ligand>
        <name>[4Fe-4S] cluster</name>
        <dbReference type="ChEBI" id="CHEBI:49883"/>
    </ligand>
</feature>
<dbReference type="EC" id="7.1.1.-" evidence="1"/>
<dbReference type="EMBL" id="AM260522">
    <property type="protein sequence ID" value="CAJ99073.1"/>
    <property type="molecule type" value="Genomic_DNA"/>
</dbReference>
<dbReference type="RefSeq" id="WP_001183507.1">
    <property type="nucleotide sequence ID" value="NC_008229.1"/>
</dbReference>
<dbReference type="SMR" id="Q17Z53"/>
<dbReference type="STRING" id="382638.Hac_0223"/>
<dbReference type="GeneID" id="31757746"/>
<dbReference type="KEGG" id="hac:Hac_0223"/>
<dbReference type="eggNOG" id="COG0377">
    <property type="taxonomic scope" value="Bacteria"/>
</dbReference>
<dbReference type="HOGENOM" id="CLU_055737_7_3_7"/>
<dbReference type="OrthoDB" id="9786737at2"/>
<dbReference type="BioCyc" id="HACI382638:HAC_RS01000-MONOMER"/>
<dbReference type="Proteomes" id="UP000000775">
    <property type="component" value="Chromosome"/>
</dbReference>
<dbReference type="GO" id="GO:0005886">
    <property type="term" value="C:plasma membrane"/>
    <property type="evidence" value="ECO:0007669"/>
    <property type="project" value="UniProtKB-SubCell"/>
</dbReference>
<dbReference type="GO" id="GO:0045271">
    <property type="term" value="C:respiratory chain complex I"/>
    <property type="evidence" value="ECO:0007669"/>
    <property type="project" value="TreeGrafter"/>
</dbReference>
<dbReference type="GO" id="GO:0051539">
    <property type="term" value="F:4 iron, 4 sulfur cluster binding"/>
    <property type="evidence" value="ECO:0007669"/>
    <property type="project" value="UniProtKB-KW"/>
</dbReference>
<dbReference type="GO" id="GO:0005506">
    <property type="term" value="F:iron ion binding"/>
    <property type="evidence" value="ECO:0007669"/>
    <property type="project" value="UniProtKB-UniRule"/>
</dbReference>
<dbReference type="GO" id="GO:0008137">
    <property type="term" value="F:NADH dehydrogenase (ubiquinone) activity"/>
    <property type="evidence" value="ECO:0007669"/>
    <property type="project" value="InterPro"/>
</dbReference>
<dbReference type="GO" id="GO:0050136">
    <property type="term" value="F:NADH:ubiquinone reductase (non-electrogenic) activity"/>
    <property type="evidence" value="ECO:0007669"/>
    <property type="project" value="UniProtKB-UniRule"/>
</dbReference>
<dbReference type="GO" id="GO:0048038">
    <property type="term" value="F:quinone binding"/>
    <property type="evidence" value="ECO:0007669"/>
    <property type="project" value="UniProtKB-KW"/>
</dbReference>
<dbReference type="GO" id="GO:0009060">
    <property type="term" value="P:aerobic respiration"/>
    <property type="evidence" value="ECO:0007669"/>
    <property type="project" value="TreeGrafter"/>
</dbReference>
<dbReference type="GO" id="GO:0015990">
    <property type="term" value="P:electron transport coupled proton transport"/>
    <property type="evidence" value="ECO:0007669"/>
    <property type="project" value="TreeGrafter"/>
</dbReference>
<dbReference type="FunFam" id="3.40.50.12280:FF:000002">
    <property type="entry name" value="NADH-quinone oxidoreductase subunit B"/>
    <property type="match status" value="1"/>
</dbReference>
<dbReference type="Gene3D" id="3.40.50.12280">
    <property type="match status" value="1"/>
</dbReference>
<dbReference type="HAMAP" id="MF_01356">
    <property type="entry name" value="NDH1_NuoB"/>
    <property type="match status" value="1"/>
</dbReference>
<dbReference type="InterPro" id="IPR006137">
    <property type="entry name" value="NADH_UbQ_OxRdtase-like_20kDa"/>
</dbReference>
<dbReference type="InterPro" id="IPR006138">
    <property type="entry name" value="NADH_UQ_OxRdtase_20Kd_su"/>
</dbReference>
<dbReference type="NCBIfam" id="TIGR01957">
    <property type="entry name" value="nuoB_fam"/>
    <property type="match status" value="1"/>
</dbReference>
<dbReference type="NCBIfam" id="NF005012">
    <property type="entry name" value="PRK06411.1"/>
    <property type="match status" value="1"/>
</dbReference>
<dbReference type="PANTHER" id="PTHR11995">
    <property type="entry name" value="NADH DEHYDROGENASE"/>
    <property type="match status" value="1"/>
</dbReference>
<dbReference type="PANTHER" id="PTHR11995:SF14">
    <property type="entry name" value="NADH DEHYDROGENASE [UBIQUINONE] IRON-SULFUR PROTEIN 7, MITOCHONDRIAL"/>
    <property type="match status" value="1"/>
</dbReference>
<dbReference type="Pfam" id="PF01058">
    <property type="entry name" value="Oxidored_q6"/>
    <property type="match status" value="1"/>
</dbReference>
<dbReference type="SUPFAM" id="SSF56770">
    <property type="entry name" value="HydA/Nqo6-like"/>
    <property type="match status" value="1"/>
</dbReference>
<proteinExistence type="inferred from homology"/>
<evidence type="ECO:0000255" key="1">
    <source>
        <dbReference type="HAMAP-Rule" id="MF_01356"/>
    </source>
</evidence>
<comment type="function">
    <text evidence="1">NDH-1 shuttles electrons from NADH, via FMN and iron-sulfur (Fe-S) centers, to quinones in the respiratory chain. The immediate electron acceptor for the enzyme in this species is believed to be ubiquinone. Couples the redox reaction to proton translocation (for every two electrons transferred, four hydrogen ions are translocated across the cytoplasmic membrane), and thus conserves the redox energy in a proton gradient.</text>
</comment>
<comment type="catalytic activity">
    <reaction evidence="1">
        <text>a quinone + NADH + 5 H(+)(in) = a quinol + NAD(+) + 4 H(+)(out)</text>
        <dbReference type="Rhea" id="RHEA:57888"/>
        <dbReference type="ChEBI" id="CHEBI:15378"/>
        <dbReference type="ChEBI" id="CHEBI:24646"/>
        <dbReference type="ChEBI" id="CHEBI:57540"/>
        <dbReference type="ChEBI" id="CHEBI:57945"/>
        <dbReference type="ChEBI" id="CHEBI:132124"/>
    </reaction>
</comment>
<comment type="cofactor">
    <cofactor evidence="1">
        <name>[4Fe-4S] cluster</name>
        <dbReference type="ChEBI" id="CHEBI:49883"/>
    </cofactor>
    <text evidence="1">Binds 1 [4Fe-4S] cluster.</text>
</comment>
<comment type="subunit">
    <text evidence="1">NDH-1 is composed of 14 different subunits. Subunits NuoB, C, D, E, F, and G constitute the peripheral sector of the complex.</text>
</comment>
<comment type="subcellular location">
    <subcellularLocation>
        <location evidence="1">Cell inner membrane</location>
        <topology evidence="1">Peripheral membrane protein</topology>
        <orientation evidence="1">Cytoplasmic side</orientation>
    </subcellularLocation>
</comment>
<comment type="similarity">
    <text evidence="1">Belongs to the complex I 20 kDa subunit family.</text>
</comment>